<gene>
    <name type="primary">Mapk11</name>
    <name type="synonym">Prkm11</name>
</gene>
<evidence type="ECO:0000250" key="1"/>
<evidence type="ECO:0000250" key="2">
    <source>
        <dbReference type="UniProtKB" id="Q15759"/>
    </source>
</evidence>
<evidence type="ECO:0000255" key="3">
    <source>
        <dbReference type="PROSITE-ProRule" id="PRU00159"/>
    </source>
</evidence>
<evidence type="ECO:0000256" key="4">
    <source>
        <dbReference type="SAM" id="MobiDB-lite"/>
    </source>
</evidence>
<evidence type="ECO:0000269" key="5">
    <source>
    </source>
</evidence>
<evidence type="ECO:0000269" key="6">
    <source>
    </source>
</evidence>
<evidence type="ECO:0000305" key="7"/>
<evidence type="ECO:0000305" key="8">
    <source>
    </source>
</evidence>
<organism>
    <name type="scientific">Mus musculus</name>
    <name type="common">Mouse</name>
    <dbReference type="NCBI Taxonomy" id="10090"/>
    <lineage>
        <taxon>Eukaryota</taxon>
        <taxon>Metazoa</taxon>
        <taxon>Chordata</taxon>
        <taxon>Craniata</taxon>
        <taxon>Vertebrata</taxon>
        <taxon>Euteleostomi</taxon>
        <taxon>Mammalia</taxon>
        <taxon>Eutheria</taxon>
        <taxon>Euarchontoglires</taxon>
        <taxon>Glires</taxon>
        <taxon>Rodentia</taxon>
        <taxon>Myomorpha</taxon>
        <taxon>Muroidea</taxon>
        <taxon>Muridae</taxon>
        <taxon>Murinae</taxon>
        <taxon>Mus</taxon>
        <taxon>Mus</taxon>
    </lineage>
</organism>
<sequence>MSGPRAGFYRQELNKTVWEVPQRLQGLRPVGSGAYGSVCSAYDARLRQKVAVKKLSRPFQSLIHARRTYRELRLLKHLKHENVIGLLDVFTPATSIEDFSEVYLVTTLMGADLNNIVKCQALSDEHVQFLVYQLLRGLKYIHSAGIIHRDLKPSNVAVNEDCELRILDFGLARQADEEMTGYVATRWYRAPEIMLNWMHYNQTVDIWSVGCIMAELLQGKALFPGNDYIDQLKRIMEVVGTPSPEVLAKISSEHARTYIQSLPPMPQKDLSSVFHGANPLAIDLLGRMLVLDSDQRVSAAEALAHAYFSQYHDPDDEPEAEPYDESVEAKERTLEEWKELTYQEVLSFKPLEPSQLPGTHEIEQ</sequence>
<comment type="function">
    <text evidence="2 5">Serine/threonine kinase which acts as an essential component of the MAP kinase signal transduction pathway. MAPK11 is one of the four p38 MAPKs which play an important role in the cascades of cellular responses evoked by extracellular stimuli such as pro-inflammatory cytokines or physical stress leading to direct activation of transcription factors. Accordingly, p38 MAPKs phosphorylate a broad range of proteins and it has been estimated that they may have approximately 200 to 300 substrates each. MAPK11 functions are mostly redundant with those of MAPK14. Some of the targets are downstream kinases which are activated through phosphorylation and further phosphorylate additional targets. RPS6KA5/MSK1 and RPS6KA4/MSK2 can directly phosphorylate and activate transcription factors such as CREB1, ATF1, the NF-kappa-B isoform RELA/NFKB3, STAT1 and STAT3, but can also phosphorylate histone H3 and the nucleosomal protein HMGN1. RPS6KA5/MSK1 and RPS6KA4/MSK2 play important roles in the rapid induction of immediate-early genes in response to stress or mitogenic stimuli, either by inducing chromatin remodeling or by recruiting the transcription machinery (PubMed:11909979). On the other hand, two other kinase targets, MAPKAPK2/MK2 and MAPKAPK3/MK3, participate in the control of gene expression mostly at the post-transcriptional level, by phosphorylating ZFP36 (tristetraprolin) and ELAVL1, and by regulating EEF2K, which is important for the elongation of mRNA during translation. MKNK1/MNK1 and MKNK2/MNK2, two other kinases activated by p38 MAPKs, regulate protein synthesis by phosphorylating the initiation factor EIF4E2. In the cytoplasm, the p38 MAPK pathway is an important regulator of protein turnover. For example, CFLAR is an inhibitor of TNF-induced apoptosis whose proteasome-mediated degradation is regulated by p38 MAPK phosphorylation. Ectodomain shedding of transmembrane proteins is regulated by p38 MAPKs as well. In response to inflammatory stimuli, p38 MAPKs phosphorylate the membrane-associated metalloprotease ADAM17. Such phosphorylation is required for ADAM17-mediated ectodomain shedding of TGF-alpha family ligands, which results in the activation of EGFR signaling and cell proliferation. Additional examples of p38 MAPK substrates are the FGFR1. FGFR1 can be translocated from the extracellular space into the cytosol and nucleus of target cells, and regulates processes such as rRNA synthesis and cell growth. FGFR1 translocation requires p38 MAPK activation. In the nucleus, many transcription factors are phosphorylated and activated by p38 MAPKs in response to different stimuli. Classical examples include ATF1, ATF2, ATF6, ELK1, PTPRH, DDIT3, TP53/p53 and MEF2C and MEF2A. The p38 MAPKs are emerging as important modulators of gene expression by regulating chromatin modifiers and remodelers. The promoters of several genes involved in the inflammatory response, such as IL6, IL8 and IL12B, display a p38 MAPK-dependent enrichment of histone H3 phosphorylation on 'Ser-10' (H3S10ph) in LPS-stimulated myeloid cells. This phosphorylation enhances the accessibility of the cryptic NF-kappa-B-binding sites marking promoters for increased NF-kappa-B recruitment. Phosphorylates methyltransferase DOT1L on 'Ser-834', 'Thr-900', 'Ser-902', 'Thr-984', 'Ser-1001', 'Ser-1009' and 'Ser-1104' (By similarity).</text>
</comment>
<comment type="catalytic activity">
    <reaction>
        <text>L-seryl-[protein] + ATP = O-phospho-L-seryl-[protein] + ADP + H(+)</text>
        <dbReference type="Rhea" id="RHEA:17989"/>
        <dbReference type="Rhea" id="RHEA-COMP:9863"/>
        <dbReference type="Rhea" id="RHEA-COMP:11604"/>
        <dbReference type="ChEBI" id="CHEBI:15378"/>
        <dbReference type="ChEBI" id="CHEBI:29999"/>
        <dbReference type="ChEBI" id="CHEBI:30616"/>
        <dbReference type="ChEBI" id="CHEBI:83421"/>
        <dbReference type="ChEBI" id="CHEBI:456216"/>
        <dbReference type="EC" id="2.7.11.24"/>
    </reaction>
</comment>
<comment type="catalytic activity">
    <reaction>
        <text>L-threonyl-[protein] + ATP = O-phospho-L-threonyl-[protein] + ADP + H(+)</text>
        <dbReference type="Rhea" id="RHEA:46608"/>
        <dbReference type="Rhea" id="RHEA-COMP:11060"/>
        <dbReference type="Rhea" id="RHEA-COMP:11605"/>
        <dbReference type="ChEBI" id="CHEBI:15378"/>
        <dbReference type="ChEBI" id="CHEBI:30013"/>
        <dbReference type="ChEBI" id="CHEBI:30616"/>
        <dbReference type="ChEBI" id="CHEBI:61977"/>
        <dbReference type="ChEBI" id="CHEBI:456216"/>
        <dbReference type="EC" id="2.7.11.24"/>
    </reaction>
</comment>
<comment type="cofactor">
    <cofactor evidence="1">
        <name>Mg(2+)</name>
        <dbReference type="ChEBI" id="CHEBI:18420"/>
    </cofactor>
</comment>
<comment type="activity regulation">
    <text evidence="6">Activated by phosphorylation on threonine and tyrosine by MAP2K3/MKK3, MAP2K4/MKK4 and MAP2K6/MKK6. MAP2K3/MKK3 and MAP2K6/MKK6 are both essential for the activation of MAPK11 induced by environmental stress. HDAC3 interacts directly and selectively with MAPK11 to repress ATF2 transcriptional activity, and regulate TNF gene expression in LPS-stimulated cells. Inhibited by SB203580 and pyridinyl-imidazole related compounds.</text>
</comment>
<comment type="subunit">
    <text evidence="1">Interacts with HDAC3 and DUSP16.</text>
</comment>
<comment type="interaction">
    <interactant intactId="EBI-645081">
        <id>Q9WUI1</id>
    </interactant>
    <interactant intactId="EBI-298727">
        <id>P47811</id>
        <label>Mapk14</label>
    </interactant>
    <organismsDiffer>false</organismsDiffer>
    <experiments>10</experiments>
</comment>
<comment type="subcellular location">
    <subcellularLocation>
        <location evidence="1">Cytoplasm</location>
    </subcellularLocation>
    <subcellularLocation>
        <location evidence="1">Nucleus</location>
    </subcellularLocation>
</comment>
<comment type="domain">
    <text>The TXY motif contains the threonine and tyrosine residues whose phosphorylation activates the MAP kinases.</text>
</comment>
<comment type="PTM">
    <text evidence="6">Dually phosphorylated on Thr-180 and Tyr-182 by MAP2K3/MKK3, MAP2K4/MKK4 and MAP2K6/MKK6, which activates the enzyme.</text>
</comment>
<comment type="similarity">
    <text evidence="7">Belongs to the protein kinase superfamily. CMGC Ser/Thr protein kinase family. MAP kinase subfamily.</text>
</comment>
<protein>
    <recommendedName>
        <fullName>Mitogen-activated protein kinase 11</fullName>
        <shortName>MAP kinase 11</shortName>
        <shortName>MAPK 11</shortName>
        <ecNumber>2.7.11.24</ecNumber>
    </recommendedName>
    <alternativeName>
        <fullName>Mitogen-activated protein kinase p38 beta</fullName>
        <shortName>MAP kinase p38 beta</shortName>
        <shortName>p38B</shortName>
    </alternativeName>
</protein>
<reference key="1">
    <citation type="submission" date="1999-03" db="EMBL/GenBank/DDBJ databases">
        <title>The primary structure of murine p38beta.</title>
        <authorList>
            <person name="Han J."/>
        </authorList>
    </citation>
    <scope>NUCLEOTIDE SEQUENCE [MRNA]</scope>
</reference>
<reference key="2">
    <citation type="submission" date="2005-09" db="EMBL/GenBank/DDBJ databases">
        <authorList>
            <person name="Mural R.J."/>
            <person name="Adams M.D."/>
            <person name="Myers E.W."/>
            <person name="Smith H.O."/>
            <person name="Venter J.C."/>
        </authorList>
    </citation>
    <scope>NUCLEOTIDE SEQUENCE [LARGE SCALE GENOMIC DNA]</scope>
</reference>
<reference key="3">
    <citation type="journal article" date="2004" name="Genome Res.">
        <title>The status, quality, and expansion of the NIH full-length cDNA project: the Mammalian Gene Collection (MGC).</title>
        <authorList>
            <consortium name="The MGC Project Team"/>
        </authorList>
    </citation>
    <scope>NUCLEOTIDE SEQUENCE [LARGE SCALE MRNA]</scope>
    <source>
        <tissue>Brain</tissue>
    </source>
</reference>
<reference key="4">
    <citation type="journal article" date="2002" name="Mol. Cell. Biol.">
        <title>MSK1 and MSK2 are required for the mitogen- and stress-induced phosphorylation of CREB and ATF1 in fibroblasts.</title>
        <authorList>
            <person name="Wiggin G.R."/>
            <person name="Soloaga A."/>
            <person name="Foster J.M."/>
            <person name="Murray-Tait V."/>
            <person name="Cohen P."/>
            <person name="Arthur J.S."/>
        </authorList>
    </citation>
    <scope>FUNCTION IN ACTIVATION OF RPS6KA5/MSK1 AND RPS6KA4/MSK2</scope>
</reference>
<reference key="5">
    <citation type="journal article" date="2010" name="Cell. Signal.">
        <title>Differential activation of p38MAPK isoforms by MKK6 and MKK3.</title>
        <authorList>
            <person name="Remy G."/>
            <person name="Risco A.M."/>
            <person name="Inesta-Vaquera F.A."/>
            <person name="Gonzalez-Teran B."/>
            <person name="Sabio G."/>
            <person name="Davis R.J."/>
            <person name="Cuenda A."/>
        </authorList>
    </citation>
    <scope>PHOSPHORYLATION AT THR-180 AND TYR-182</scope>
    <scope>ACTIVITY REGULATION</scope>
</reference>
<reference key="6">
    <citation type="journal article" date="2002" name="Biol. Chem.">
        <title>In the cellular garden of forking paths: how p38 MAPKs signal for downstream assistance.</title>
        <authorList>
            <person name="Shi Y."/>
            <person name="Gaestel M."/>
        </authorList>
    </citation>
    <scope>REVIEW ON FUNCTION</scope>
</reference>
<reference key="7">
    <citation type="journal article" date="2010" name="Biochem. J.">
        <title>Mechanisms and functions of p38 MAPK signalling.</title>
        <authorList>
            <person name="Cuadrado A."/>
            <person name="Nebreda A.R."/>
        </authorList>
    </citation>
    <scope>REVIEW ON ACTIVITY REGULATION</scope>
    <scope>REVIEW ON FUNCTION</scope>
</reference>
<feature type="chain" id="PRO_0000186281" description="Mitogen-activated protein kinase 11">
    <location>
        <begin position="1"/>
        <end position="364"/>
    </location>
</feature>
<feature type="domain" description="Protein kinase" evidence="3">
    <location>
        <begin position="24"/>
        <end position="308"/>
    </location>
</feature>
<feature type="region of interest" description="Disordered" evidence="4">
    <location>
        <begin position="312"/>
        <end position="331"/>
    </location>
</feature>
<feature type="short sequence motif" description="TXY">
    <location>
        <begin position="180"/>
        <end position="182"/>
    </location>
</feature>
<feature type="compositionally biased region" description="Acidic residues" evidence="4">
    <location>
        <begin position="314"/>
        <end position="326"/>
    </location>
</feature>
<feature type="active site" description="Proton acceptor" evidence="3">
    <location>
        <position position="168"/>
    </location>
</feature>
<feature type="binding site" evidence="3">
    <location>
        <begin position="30"/>
        <end position="38"/>
    </location>
    <ligand>
        <name>ATP</name>
        <dbReference type="ChEBI" id="CHEBI:30616"/>
    </ligand>
</feature>
<feature type="binding site" evidence="3">
    <location>
        <position position="53"/>
    </location>
    <ligand>
        <name>ATP</name>
        <dbReference type="ChEBI" id="CHEBI:30616"/>
    </ligand>
</feature>
<feature type="binding site" evidence="1">
    <location>
        <position position="71"/>
    </location>
    <ligand>
        <name>nilotinib</name>
        <dbReference type="ChEBI" id="CHEBI:52172"/>
    </ligand>
</feature>
<feature type="modified residue" description="Phosphothreonine; by MAP2K3, MAP2K4 and MAP2K6" evidence="8">
    <location>
        <position position="180"/>
    </location>
</feature>
<feature type="modified residue" description="Phosphotyrosine; by MAP2K3, MAP2K4 and MAP2K6" evidence="8">
    <location>
        <position position="182"/>
    </location>
</feature>
<feature type="modified residue" description="Phosphotyrosine; by ZAP70" evidence="1">
    <location>
        <position position="323"/>
    </location>
</feature>
<feature type="sequence conflict" description="In Ref. 1; AAD30116." evidence="7" ref="1">
    <original>R</original>
    <variation>P</variation>
    <location>
        <position position="173"/>
    </location>
</feature>
<feature type="sequence conflict" description="In Ref. 1; AAD30116." evidence="7" ref="1">
    <original>H</original>
    <variation>R</variation>
    <location>
        <position position="312"/>
    </location>
</feature>
<proteinExistence type="evidence at protein level"/>
<name>MK11_MOUSE</name>
<accession>Q9WUI1</accession>
<accession>Q569F1</accession>
<keyword id="KW-0067">ATP-binding</keyword>
<keyword id="KW-0963">Cytoplasm</keyword>
<keyword id="KW-0418">Kinase</keyword>
<keyword id="KW-0547">Nucleotide-binding</keyword>
<keyword id="KW-0539">Nucleus</keyword>
<keyword id="KW-0597">Phosphoprotein</keyword>
<keyword id="KW-1185">Reference proteome</keyword>
<keyword id="KW-0723">Serine/threonine-protein kinase</keyword>
<keyword id="KW-0346">Stress response</keyword>
<keyword id="KW-0804">Transcription</keyword>
<keyword id="KW-0805">Transcription regulation</keyword>
<keyword id="KW-0808">Transferase</keyword>
<dbReference type="EC" id="2.7.11.24"/>
<dbReference type="EMBL" id="AF135185">
    <property type="protein sequence ID" value="AAD30116.1"/>
    <property type="molecule type" value="mRNA"/>
</dbReference>
<dbReference type="EMBL" id="CH466550">
    <property type="protein sequence ID" value="EDL04368.1"/>
    <property type="molecule type" value="Genomic_DNA"/>
</dbReference>
<dbReference type="EMBL" id="BC092526">
    <property type="protein sequence ID" value="AAH92526.1"/>
    <property type="molecule type" value="mRNA"/>
</dbReference>
<dbReference type="CCDS" id="CCDS27741.1"/>
<dbReference type="RefSeq" id="NP_035291.4">
    <property type="nucleotide sequence ID" value="NM_011161.5"/>
</dbReference>
<dbReference type="SMR" id="Q9WUI1"/>
<dbReference type="BioGRID" id="202374">
    <property type="interactions" value="163"/>
</dbReference>
<dbReference type="FunCoup" id="Q9WUI1">
    <property type="interactions" value="3255"/>
</dbReference>
<dbReference type="IntAct" id="Q9WUI1">
    <property type="interactions" value="1"/>
</dbReference>
<dbReference type="MINT" id="Q9WUI1"/>
<dbReference type="STRING" id="10090.ENSMUSP00000086204"/>
<dbReference type="BindingDB" id="Q9WUI1"/>
<dbReference type="ChEMBL" id="CHEMBL4335"/>
<dbReference type="iPTMnet" id="Q9WUI1"/>
<dbReference type="PhosphoSitePlus" id="Q9WUI1"/>
<dbReference type="jPOST" id="Q9WUI1"/>
<dbReference type="PaxDb" id="10090-ENSMUSP00000086204"/>
<dbReference type="ProteomicsDB" id="291465"/>
<dbReference type="Pumba" id="Q9WUI1"/>
<dbReference type="Antibodypedia" id="28468">
    <property type="antibodies" value="509 antibodies from 39 providers"/>
</dbReference>
<dbReference type="DNASU" id="19094"/>
<dbReference type="Ensembl" id="ENSMUST00000088823.5">
    <property type="protein sequence ID" value="ENSMUSP00000086204.4"/>
    <property type="gene ID" value="ENSMUSG00000053137.8"/>
</dbReference>
<dbReference type="GeneID" id="19094"/>
<dbReference type="KEGG" id="mmu:19094"/>
<dbReference type="UCSC" id="uc007xfp.2">
    <property type="organism name" value="mouse"/>
</dbReference>
<dbReference type="AGR" id="MGI:1338024"/>
<dbReference type="CTD" id="5600"/>
<dbReference type="MGI" id="MGI:1338024">
    <property type="gene designation" value="Mapk11"/>
</dbReference>
<dbReference type="VEuPathDB" id="HostDB:ENSMUSG00000053137"/>
<dbReference type="eggNOG" id="KOG0660">
    <property type="taxonomic scope" value="Eukaryota"/>
</dbReference>
<dbReference type="GeneTree" id="ENSGT00940000160790"/>
<dbReference type="HOGENOM" id="CLU_000288_181_1_1"/>
<dbReference type="InParanoid" id="Q9WUI1"/>
<dbReference type="OMA" id="MDIPRPE"/>
<dbReference type="OrthoDB" id="192887at2759"/>
<dbReference type="PhylomeDB" id="Q9WUI1"/>
<dbReference type="TreeFam" id="TF105100"/>
<dbReference type="Reactome" id="R-MMU-168638">
    <property type="pathway name" value="NOD1/2 Signaling Pathway"/>
</dbReference>
<dbReference type="Reactome" id="R-MMU-171007">
    <property type="pathway name" value="p38MAPK events"/>
</dbReference>
<dbReference type="Reactome" id="R-MMU-198753">
    <property type="pathway name" value="ERK/MAPK targets"/>
</dbReference>
<dbReference type="Reactome" id="R-MMU-2559580">
    <property type="pathway name" value="Oxidative Stress Induced Senescence"/>
</dbReference>
<dbReference type="Reactome" id="R-MMU-4420097">
    <property type="pathway name" value="VEGFA-VEGFR2 Pathway"/>
</dbReference>
<dbReference type="Reactome" id="R-MMU-450302">
    <property type="pathway name" value="activated TAK1 mediates p38 MAPK activation"/>
</dbReference>
<dbReference type="Reactome" id="R-MMU-450341">
    <property type="pathway name" value="Activation of the AP-1 family of transcription factors"/>
</dbReference>
<dbReference type="Reactome" id="R-MMU-525793">
    <property type="pathway name" value="Myogenesis"/>
</dbReference>
<dbReference type="Reactome" id="R-MMU-5668599">
    <property type="pathway name" value="RHO GTPases Activate NADPH Oxidases"/>
</dbReference>
<dbReference type="Reactome" id="R-MMU-6804756">
    <property type="pathway name" value="Regulation of TP53 Activity through Phosphorylation"/>
</dbReference>
<dbReference type="BioGRID-ORCS" id="19094">
    <property type="hits" value="1 hit in 80 CRISPR screens"/>
</dbReference>
<dbReference type="PRO" id="PR:Q9WUI1"/>
<dbReference type="Proteomes" id="UP000000589">
    <property type="component" value="Chromosome 15"/>
</dbReference>
<dbReference type="RNAct" id="Q9WUI1">
    <property type="molecule type" value="protein"/>
</dbReference>
<dbReference type="Bgee" id="ENSMUSG00000053137">
    <property type="expression patterns" value="Expressed in lumbar dorsal root ganglion and 168 other cell types or tissues"/>
</dbReference>
<dbReference type="GO" id="GO:0005829">
    <property type="term" value="C:cytosol"/>
    <property type="evidence" value="ECO:0000315"/>
    <property type="project" value="MGI"/>
</dbReference>
<dbReference type="GO" id="GO:0005654">
    <property type="term" value="C:nucleoplasm"/>
    <property type="evidence" value="ECO:0000304"/>
    <property type="project" value="Reactome"/>
</dbReference>
<dbReference type="GO" id="GO:0005524">
    <property type="term" value="F:ATP binding"/>
    <property type="evidence" value="ECO:0007669"/>
    <property type="project" value="UniProtKB-KW"/>
</dbReference>
<dbReference type="GO" id="GO:0004707">
    <property type="term" value="F:MAP kinase activity"/>
    <property type="evidence" value="ECO:0000315"/>
    <property type="project" value="MGI"/>
</dbReference>
<dbReference type="GO" id="GO:0106310">
    <property type="term" value="F:protein serine kinase activity"/>
    <property type="evidence" value="ECO:0007669"/>
    <property type="project" value="RHEA"/>
</dbReference>
<dbReference type="GO" id="GO:0004674">
    <property type="term" value="F:protein serine/threonine kinase activity"/>
    <property type="evidence" value="ECO:0000269"/>
    <property type="project" value="Reactome"/>
</dbReference>
<dbReference type="GO" id="GO:0060348">
    <property type="term" value="P:bone development"/>
    <property type="evidence" value="ECO:0000315"/>
    <property type="project" value="MGI"/>
</dbReference>
<dbReference type="GO" id="GO:0060038">
    <property type="term" value="P:cardiac muscle cell proliferation"/>
    <property type="evidence" value="ECO:0000315"/>
    <property type="project" value="MGI"/>
</dbReference>
<dbReference type="GO" id="GO:0071347">
    <property type="term" value="P:cellular response to interleukin-1"/>
    <property type="evidence" value="ECO:0007669"/>
    <property type="project" value="Ensembl"/>
</dbReference>
<dbReference type="GO" id="GO:0071493">
    <property type="term" value="P:cellular response to UV-B"/>
    <property type="evidence" value="ECO:0007669"/>
    <property type="project" value="Ensembl"/>
</dbReference>
<dbReference type="GO" id="GO:0098586">
    <property type="term" value="P:cellular response to virus"/>
    <property type="evidence" value="ECO:0007669"/>
    <property type="project" value="Ensembl"/>
</dbReference>
<dbReference type="GO" id="GO:0000165">
    <property type="term" value="P:MAPK cascade"/>
    <property type="evidence" value="ECO:0000315"/>
    <property type="project" value="MGI"/>
</dbReference>
<dbReference type="GO" id="GO:0060044">
    <property type="term" value="P:negative regulation of cardiac muscle cell proliferation"/>
    <property type="evidence" value="ECO:0000315"/>
    <property type="project" value="MGI"/>
</dbReference>
<dbReference type="GO" id="GO:0001649">
    <property type="term" value="P:osteoblast differentiation"/>
    <property type="evidence" value="ECO:0000315"/>
    <property type="project" value="MGI"/>
</dbReference>
<dbReference type="GO" id="GO:0038066">
    <property type="term" value="P:p38MAPK cascade"/>
    <property type="evidence" value="ECO:0007669"/>
    <property type="project" value="Ensembl"/>
</dbReference>
<dbReference type="GO" id="GO:0032735">
    <property type="term" value="P:positive regulation of interleukin-12 production"/>
    <property type="evidence" value="ECO:0007669"/>
    <property type="project" value="Ensembl"/>
</dbReference>
<dbReference type="GO" id="GO:0060043">
    <property type="term" value="P:regulation of cardiac muscle cell proliferation"/>
    <property type="evidence" value="ECO:0000316"/>
    <property type="project" value="MGI"/>
</dbReference>
<dbReference type="GO" id="GO:0051403">
    <property type="term" value="P:stress-activated MAPK cascade"/>
    <property type="evidence" value="ECO:0000250"/>
    <property type="project" value="UniProtKB"/>
</dbReference>
<dbReference type="FunFam" id="1.10.510.10:FF:000063">
    <property type="entry name" value="Mitogen-activated protein kinase 14"/>
    <property type="match status" value="1"/>
</dbReference>
<dbReference type="FunFam" id="3.30.200.20:FF:000769">
    <property type="entry name" value="Mitogen-activated protein kinase 14"/>
    <property type="match status" value="1"/>
</dbReference>
<dbReference type="Gene3D" id="3.30.200.20">
    <property type="entry name" value="Phosphorylase Kinase, domain 1"/>
    <property type="match status" value="1"/>
</dbReference>
<dbReference type="Gene3D" id="1.10.510.10">
    <property type="entry name" value="Transferase(Phosphotransferase) domain 1"/>
    <property type="match status" value="1"/>
</dbReference>
<dbReference type="InterPro" id="IPR011009">
    <property type="entry name" value="Kinase-like_dom_sf"/>
</dbReference>
<dbReference type="InterPro" id="IPR050117">
    <property type="entry name" value="MAP_kinase"/>
</dbReference>
<dbReference type="InterPro" id="IPR003527">
    <property type="entry name" value="MAP_kinase_CS"/>
</dbReference>
<dbReference type="InterPro" id="IPR008352">
    <property type="entry name" value="MAPK_p38-like"/>
</dbReference>
<dbReference type="InterPro" id="IPR000719">
    <property type="entry name" value="Prot_kinase_dom"/>
</dbReference>
<dbReference type="InterPro" id="IPR017441">
    <property type="entry name" value="Protein_kinase_ATP_BS"/>
</dbReference>
<dbReference type="PANTHER" id="PTHR24055">
    <property type="entry name" value="MITOGEN-ACTIVATED PROTEIN KINASE"/>
    <property type="match status" value="1"/>
</dbReference>
<dbReference type="Pfam" id="PF00069">
    <property type="entry name" value="Pkinase"/>
    <property type="match status" value="1"/>
</dbReference>
<dbReference type="PRINTS" id="PR01773">
    <property type="entry name" value="P38MAPKINASE"/>
</dbReference>
<dbReference type="SMART" id="SM00220">
    <property type="entry name" value="S_TKc"/>
    <property type="match status" value="1"/>
</dbReference>
<dbReference type="SUPFAM" id="SSF56112">
    <property type="entry name" value="Protein kinase-like (PK-like)"/>
    <property type="match status" value="1"/>
</dbReference>
<dbReference type="PROSITE" id="PS01351">
    <property type="entry name" value="MAPK"/>
    <property type="match status" value="1"/>
</dbReference>
<dbReference type="PROSITE" id="PS00107">
    <property type="entry name" value="PROTEIN_KINASE_ATP"/>
    <property type="match status" value="1"/>
</dbReference>
<dbReference type="PROSITE" id="PS50011">
    <property type="entry name" value="PROTEIN_KINASE_DOM"/>
    <property type="match status" value="1"/>
</dbReference>